<gene>
    <name evidence="1" type="primary">metG</name>
    <name type="ordered locus">Blon_2426</name>
    <name type="ordered locus">BLIJ_2497</name>
</gene>
<keyword id="KW-0030">Aminoacyl-tRNA synthetase</keyword>
<keyword id="KW-0067">ATP-binding</keyword>
<keyword id="KW-0963">Cytoplasm</keyword>
<keyword id="KW-0436">Ligase</keyword>
<keyword id="KW-0479">Metal-binding</keyword>
<keyword id="KW-0547">Nucleotide-binding</keyword>
<keyword id="KW-0648">Protein biosynthesis</keyword>
<keyword id="KW-0862">Zinc</keyword>
<feature type="chain" id="PRO_1000199279" description="Methionine--tRNA ligase">
    <location>
        <begin position="1"/>
        <end position="621"/>
    </location>
</feature>
<feature type="short sequence motif" description="'HIGH' region">
    <location>
        <begin position="11"/>
        <end position="21"/>
    </location>
</feature>
<feature type="short sequence motif" description="'KMSKS' region">
    <location>
        <begin position="347"/>
        <end position="351"/>
    </location>
</feature>
<feature type="binding site" evidence="1">
    <location>
        <position position="143"/>
    </location>
    <ligand>
        <name>Zn(2+)</name>
        <dbReference type="ChEBI" id="CHEBI:29105"/>
    </ligand>
</feature>
<feature type="binding site" evidence="1">
    <location>
        <position position="146"/>
    </location>
    <ligand>
        <name>Zn(2+)</name>
        <dbReference type="ChEBI" id="CHEBI:29105"/>
    </ligand>
</feature>
<feature type="binding site" evidence="1">
    <location>
        <position position="156"/>
    </location>
    <ligand>
        <name>Zn(2+)</name>
        <dbReference type="ChEBI" id="CHEBI:29105"/>
    </ligand>
</feature>
<feature type="binding site" evidence="1">
    <location>
        <position position="159"/>
    </location>
    <ligand>
        <name>Zn(2+)</name>
        <dbReference type="ChEBI" id="CHEBI:29105"/>
    </ligand>
</feature>
<feature type="binding site" evidence="1">
    <location>
        <position position="350"/>
    </location>
    <ligand>
        <name>ATP</name>
        <dbReference type="ChEBI" id="CHEBI:30616"/>
    </ligand>
</feature>
<organism>
    <name type="scientific">Bifidobacterium longum subsp. infantis (strain ATCC 15697 / DSM 20088 / JCM 1222 / NCTC 11817 / S12)</name>
    <dbReference type="NCBI Taxonomy" id="391904"/>
    <lineage>
        <taxon>Bacteria</taxon>
        <taxon>Bacillati</taxon>
        <taxon>Actinomycetota</taxon>
        <taxon>Actinomycetes</taxon>
        <taxon>Bifidobacteriales</taxon>
        <taxon>Bifidobacteriaceae</taxon>
        <taxon>Bifidobacterium</taxon>
    </lineage>
</organism>
<dbReference type="EC" id="6.1.1.10" evidence="1"/>
<dbReference type="EMBL" id="CP001095">
    <property type="protein sequence ID" value="ACJ53480.1"/>
    <property type="molecule type" value="Genomic_DNA"/>
</dbReference>
<dbReference type="EMBL" id="AP010889">
    <property type="protein sequence ID" value="BAJ70074.1"/>
    <property type="status" value="ALT_INIT"/>
    <property type="molecule type" value="Genomic_DNA"/>
</dbReference>
<dbReference type="RefSeq" id="WP_012578647.1">
    <property type="nucleotide sequence ID" value="NC_011593.1"/>
</dbReference>
<dbReference type="SMR" id="B7GP85"/>
<dbReference type="KEGG" id="bln:Blon_2426"/>
<dbReference type="KEGG" id="blon:BLIJ_2497"/>
<dbReference type="PATRIC" id="fig|391904.8.peg.2501"/>
<dbReference type="HOGENOM" id="CLU_009710_1_2_11"/>
<dbReference type="Proteomes" id="UP000001360">
    <property type="component" value="Chromosome"/>
</dbReference>
<dbReference type="GO" id="GO:0005829">
    <property type="term" value="C:cytosol"/>
    <property type="evidence" value="ECO:0007669"/>
    <property type="project" value="TreeGrafter"/>
</dbReference>
<dbReference type="GO" id="GO:0005524">
    <property type="term" value="F:ATP binding"/>
    <property type="evidence" value="ECO:0007669"/>
    <property type="project" value="UniProtKB-UniRule"/>
</dbReference>
<dbReference type="GO" id="GO:0046872">
    <property type="term" value="F:metal ion binding"/>
    <property type="evidence" value="ECO:0007669"/>
    <property type="project" value="UniProtKB-KW"/>
</dbReference>
<dbReference type="GO" id="GO:0004825">
    <property type="term" value="F:methionine-tRNA ligase activity"/>
    <property type="evidence" value="ECO:0007669"/>
    <property type="project" value="UniProtKB-UniRule"/>
</dbReference>
<dbReference type="GO" id="GO:0006431">
    <property type="term" value="P:methionyl-tRNA aminoacylation"/>
    <property type="evidence" value="ECO:0007669"/>
    <property type="project" value="UniProtKB-UniRule"/>
</dbReference>
<dbReference type="CDD" id="cd07957">
    <property type="entry name" value="Anticodon_Ia_Met"/>
    <property type="match status" value="1"/>
</dbReference>
<dbReference type="CDD" id="cd00814">
    <property type="entry name" value="MetRS_core"/>
    <property type="match status" value="1"/>
</dbReference>
<dbReference type="FunFam" id="2.20.28.20:FF:000001">
    <property type="entry name" value="Methionine--tRNA ligase"/>
    <property type="match status" value="1"/>
</dbReference>
<dbReference type="Gene3D" id="3.40.50.620">
    <property type="entry name" value="HUPs"/>
    <property type="match status" value="1"/>
</dbReference>
<dbReference type="Gene3D" id="1.10.730.10">
    <property type="entry name" value="Isoleucyl-tRNA Synthetase, Domain 1"/>
    <property type="match status" value="1"/>
</dbReference>
<dbReference type="Gene3D" id="2.20.28.20">
    <property type="entry name" value="Methionyl-tRNA synthetase, Zn-domain"/>
    <property type="match status" value="1"/>
</dbReference>
<dbReference type="HAMAP" id="MF_00098">
    <property type="entry name" value="Met_tRNA_synth_type1"/>
    <property type="match status" value="1"/>
</dbReference>
<dbReference type="InterPro" id="IPR041872">
    <property type="entry name" value="Anticodon_Met"/>
</dbReference>
<dbReference type="InterPro" id="IPR013155">
    <property type="entry name" value="M/V/L/I-tRNA-synth_anticd-bd"/>
</dbReference>
<dbReference type="InterPro" id="IPR023458">
    <property type="entry name" value="Met-tRNA_ligase_1"/>
</dbReference>
<dbReference type="InterPro" id="IPR014758">
    <property type="entry name" value="Met-tRNA_synth"/>
</dbReference>
<dbReference type="InterPro" id="IPR015413">
    <property type="entry name" value="Methionyl/Leucyl_tRNA_Synth"/>
</dbReference>
<dbReference type="InterPro" id="IPR033911">
    <property type="entry name" value="MetRS_core"/>
</dbReference>
<dbReference type="InterPro" id="IPR029038">
    <property type="entry name" value="MetRS_Zn"/>
</dbReference>
<dbReference type="InterPro" id="IPR014729">
    <property type="entry name" value="Rossmann-like_a/b/a_fold"/>
</dbReference>
<dbReference type="InterPro" id="IPR009080">
    <property type="entry name" value="tRNAsynth_Ia_anticodon-bd"/>
</dbReference>
<dbReference type="NCBIfam" id="TIGR00398">
    <property type="entry name" value="metG"/>
    <property type="match status" value="1"/>
</dbReference>
<dbReference type="PANTHER" id="PTHR45765">
    <property type="entry name" value="METHIONINE--TRNA LIGASE"/>
    <property type="match status" value="1"/>
</dbReference>
<dbReference type="PANTHER" id="PTHR45765:SF1">
    <property type="entry name" value="METHIONINE--TRNA LIGASE, CYTOPLASMIC"/>
    <property type="match status" value="1"/>
</dbReference>
<dbReference type="Pfam" id="PF08264">
    <property type="entry name" value="Anticodon_1"/>
    <property type="match status" value="1"/>
</dbReference>
<dbReference type="Pfam" id="PF09334">
    <property type="entry name" value="tRNA-synt_1g"/>
    <property type="match status" value="1"/>
</dbReference>
<dbReference type="PRINTS" id="PR01041">
    <property type="entry name" value="TRNASYNTHMET"/>
</dbReference>
<dbReference type="SUPFAM" id="SSF47323">
    <property type="entry name" value="Anticodon-binding domain of a subclass of class I aminoacyl-tRNA synthetases"/>
    <property type="match status" value="1"/>
</dbReference>
<dbReference type="SUPFAM" id="SSF57770">
    <property type="entry name" value="Methionyl-tRNA synthetase (MetRS), Zn-domain"/>
    <property type="match status" value="1"/>
</dbReference>
<dbReference type="SUPFAM" id="SSF52374">
    <property type="entry name" value="Nucleotidylyl transferase"/>
    <property type="match status" value="1"/>
</dbReference>
<comment type="function">
    <text evidence="1">Is required not only for elongation of protein synthesis but also for the initiation of all mRNA translation through initiator tRNA(fMet) aminoacylation.</text>
</comment>
<comment type="catalytic activity">
    <reaction evidence="1">
        <text>tRNA(Met) + L-methionine + ATP = L-methionyl-tRNA(Met) + AMP + diphosphate</text>
        <dbReference type="Rhea" id="RHEA:13481"/>
        <dbReference type="Rhea" id="RHEA-COMP:9667"/>
        <dbReference type="Rhea" id="RHEA-COMP:9698"/>
        <dbReference type="ChEBI" id="CHEBI:30616"/>
        <dbReference type="ChEBI" id="CHEBI:33019"/>
        <dbReference type="ChEBI" id="CHEBI:57844"/>
        <dbReference type="ChEBI" id="CHEBI:78442"/>
        <dbReference type="ChEBI" id="CHEBI:78530"/>
        <dbReference type="ChEBI" id="CHEBI:456215"/>
        <dbReference type="EC" id="6.1.1.10"/>
    </reaction>
</comment>
<comment type="cofactor">
    <cofactor evidence="1">
        <name>Zn(2+)</name>
        <dbReference type="ChEBI" id="CHEBI:29105"/>
    </cofactor>
    <text evidence="1">Binds 1 zinc ion per subunit.</text>
</comment>
<comment type="subunit">
    <text evidence="1">Monomer.</text>
</comment>
<comment type="subcellular location">
    <subcellularLocation>
        <location evidence="1">Cytoplasm</location>
    </subcellularLocation>
</comment>
<comment type="similarity">
    <text evidence="1">Belongs to the class-I aminoacyl-tRNA synthetase family. MetG type 1 subfamily.</text>
</comment>
<comment type="sequence caution" evidence="2">
    <conflict type="erroneous initiation">
        <sequence resource="EMBL-CDS" id="BAJ70074"/>
    </conflict>
    <text>Truncated N-terminus.</text>
</comment>
<evidence type="ECO:0000255" key="1">
    <source>
        <dbReference type="HAMAP-Rule" id="MF_00098"/>
    </source>
</evidence>
<evidence type="ECO:0000305" key="2"/>
<name>SYM_BIFLS</name>
<proteinExistence type="inferred from homology"/>
<protein>
    <recommendedName>
        <fullName evidence="1">Methionine--tRNA ligase</fullName>
        <ecNumber evidence="1">6.1.1.10</ecNumber>
    </recommendedName>
    <alternativeName>
        <fullName evidence="1">Methionyl-tRNA synthetase</fullName>
        <shortName evidence="1">MetRS</shortName>
    </alternativeName>
</protein>
<accession>B7GP85</accession>
<accession>E8MPJ5</accession>
<reference key="1">
    <citation type="journal article" date="2008" name="Proc. Natl. Acad. Sci. U.S.A.">
        <title>The genome sequence of Bifidobacterium longum subsp. infantis reveals adaptations for milk utilization within the infant microbiome.</title>
        <authorList>
            <person name="Sela D.A."/>
            <person name="Chapman J."/>
            <person name="Adeuya A."/>
            <person name="Kim J.H."/>
            <person name="Chen F."/>
            <person name="Whitehead T.R."/>
            <person name="Lapidus A."/>
            <person name="Rokhsar D.S."/>
            <person name="Lebrilla C.B."/>
            <person name="German J.B."/>
            <person name="Price N.P."/>
            <person name="Richardson P.M."/>
            <person name="Mills D.A."/>
        </authorList>
    </citation>
    <scope>NUCLEOTIDE SEQUENCE [LARGE SCALE GENOMIC DNA]</scope>
    <source>
        <strain>ATCC 15697 / DSM 20088 / JCM 1222 / NCTC 11817 / S12</strain>
    </source>
</reference>
<reference key="2">
    <citation type="journal article" date="2011" name="Nature">
        <title>Bifidobacteria can protect from enteropathogenic infection through production of acetate.</title>
        <authorList>
            <person name="Fukuda S."/>
            <person name="Toh H."/>
            <person name="Hase K."/>
            <person name="Oshima K."/>
            <person name="Nakanishi Y."/>
            <person name="Yoshimura K."/>
            <person name="Tobe T."/>
            <person name="Clarke J.M."/>
            <person name="Topping D.L."/>
            <person name="Suzuki T."/>
            <person name="Taylor T.D."/>
            <person name="Itoh K."/>
            <person name="Kikuchi J."/>
            <person name="Morita H."/>
            <person name="Hattori M."/>
            <person name="Ohno H."/>
        </authorList>
    </citation>
    <scope>NUCLEOTIDE SEQUENCE [LARGE SCALE GENOMIC DNA]</scope>
    <source>
        <strain>ATCC 15697 / DSM 20088 / JCM 1222 / NCTC 11817 / S12</strain>
    </source>
</reference>
<sequence>MSHVLVNVAWPYANGPRHIGHVAGFGVPSDVYARYERMKGNDVLMVSGTDEHGTPILVEAEKEGLTAQELANRYNRVIAKDLCDLGLSYDLFTRTTTGNHEHVVQEMFKQCLENGYIYKGSQQVAISPSTGRTLPDRYIEGECPICHAEGARGDQCDACGNELDPDELINPVSKINGETPRFEQTEHYFLDLPALAEANKAWLETRKGWRTNVINFSLGLFKEVKPRAITRDIDWGIPVPVKGWIDNPNKKLYVWFDAVIGYLSASIEWARRQGDPEKWREWWNDPKCPAYYFMGKDNITFHSQIWPSEMLAYNGKGSKGGETGPMGPLNLPEQVVASEFMTMEGKKFSSSRGIVIYVKDILARYPVDAVRYYISVAGPESSDSDFTWAEFVRHNNEELASSWGNLVNRVANLINKNFGEIPPLDEDSMTNEDRGLLEEASAAFDVVGSSIETHHQKHALSEAMRVVGDINKYISATEPWKIKDDQARLGTVLHVAAQAVSDANHLLAPFLPHSAQKVWEALGGTGTFSPLPELKEVEDLDKPGFTYPIITGDYELGVNVHPWKSEAIEVGAVVPKPAPIFAKIPTEAVEEELARFDEALAARRAAEAERLAAEKAKLAAE</sequence>